<evidence type="ECO:0000255" key="1">
    <source>
        <dbReference type="HAMAP-Rule" id="MF_01310"/>
    </source>
</evidence>
<evidence type="ECO:0000305" key="2"/>
<accession>A5D5E6</accession>
<feature type="chain" id="PRO_1000086199" description="Small ribosomal subunit protein uS11">
    <location>
        <begin position="1"/>
        <end position="129"/>
    </location>
</feature>
<gene>
    <name evidence="1" type="primary">rpsK</name>
    <name type="ordered locus">PTH_0346</name>
</gene>
<reference key="1">
    <citation type="journal article" date="2008" name="Genome Res.">
        <title>The genome of Pelotomaculum thermopropionicum reveals niche-associated evolution in anaerobic microbiota.</title>
        <authorList>
            <person name="Kosaka T."/>
            <person name="Kato S."/>
            <person name="Shimoyama T."/>
            <person name="Ishii S."/>
            <person name="Abe T."/>
            <person name="Watanabe K."/>
        </authorList>
    </citation>
    <scope>NUCLEOTIDE SEQUENCE [LARGE SCALE GENOMIC DNA]</scope>
    <source>
        <strain>DSM 13744 / JCM 10971 / SI</strain>
    </source>
</reference>
<dbReference type="EMBL" id="AP009389">
    <property type="protein sequence ID" value="BAF58527.1"/>
    <property type="molecule type" value="Genomic_DNA"/>
</dbReference>
<dbReference type="SMR" id="A5D5E6"/>
<dbReference type="STRING" id="370438.PTH_0346"/>
<dbReference type="KEGG" id="pth:PTH_0346"/>
<dbReference type="eggNOG" id="COG0100">
    <property type="taxonomic scope" value="Bacteria"/>
</dbReference>
<dbReference type="HOGENOM" id="CLU_072439_5_0_9"/>
<dbReference type="Proteomes" id="UP000006556">
    <property type="component" value="Chromosome"/>
</dbReference>
<dbReference type="GO" id="GO:1990904">
    <property type="term" value="C:ribonucleoprotein complex"/>
    <property type="evidence" value="ECO:0007669"/>
    <property type="project" value="UniProtKB-KW"/>
</dbReference>
<dbReference type="GO" id="GO:0005840">
    <property type="term" value="C:ribosome"/>
    <property type="evidence" value="ECO:0007669"/>
    <property type="project" value="UniProtKB-KW"/>
</dbReference>
<dbReference type="GO" id="GO:0019843">
    <property type="term" value="F:rRNA binding"/>
    <property type="evidence" value="ECO:0007669"/>
    <property type="project" value="UniProtKB-UniRule"/>
</dbReference>
<dbReference type="GO" id="GO:0003735">
    <property type="term" value="F:structural constituent of ribosome"/>
    <property type="evidence" value="ECO:0007669"/>
    <property type="project" value="InterPro"/>
</dbReference>
<dbReference type="GO" id="GO:0006412">
    <property type="term" value="P:translation"/>
    <property type="evidence" value="ECO:0007669"/>
    <property type="project" value="UniProtKB-UniRule"/>
</dbReference>
<dbReference type="FunFam" id="3.30.420.80:FF:000001">
    <property type="entry name" value="30S ribosomal protein S11"/>
    <property type="match status" value="1"/>
</dbReference>
<dbReference type="Gene3D" id="3.30.420.80">
    <property type="entry name" value="Ribosomal protein S11"/>
    <property type="match status" value="1"/>
</dbReference>
<dbReference type="HAMAP" id="MF_01310">
    <property type="entry name" value="Ribosomal_uS11"/>
    <property type="match status" value="1"/>
</dbReference>
<dbReference type="InterPro" id="IPR001971">
    <property type="entry name" value="Ribosomal_uS11"/>
</dbReference>
<dbReference type="InterPro" id="IPR019981">
    <property type="entry name" value="Ribosomal_uS11_bac-type"/>
</dbReference>
<dbReference type="InterPro" id="IPR018102">
    <property type="entry name" value="Ribosomal_uS11_CS"/>
</dbReference>
<dbReference type="InterPro" id="IPR036967">
    <property type="entry name" value="Ribosomal_uS11_sf"/>
</dbReference>
<dbReference type="NCBIfam" id="NF003698">
    <property type="entry name" value="PRK05309.1"/>
    <property type="match status" value="1"/>
</dbReference>
<dbReference type="NCBIfam" id="TIGR03632">
    <property type="entry name" value="uS11_bact"/>
    <property type="match status" value="1"/>
</dbReference>
<dbReference type="PANTHER" id="PTHR11759">
    <property type="entry name" value="40S RIBOSOMAL PROTEIN S14/30S RIBOSOMAL PROTEIN S11"/>
    <property type="match status" value="1"/>
</dbReference>
<dbReference type="Pfam" id="PF00411">
    <property type="entry name" value="Ribosomal_S11"/>
    <property type="match status" value="1"/>
</dbReference>
<dbReference type="PIRSF" id="PIRSF002131">
    <property type="entry name" value="Ribosomal_S11"/>
    <property type="match status" value="1"/>
</dbReference>
<dbReference type="SUPFAM" id="SSF53137">
    <property type="entry name" value="Translational machinery components"/>
    <property type="match status" value="1"/>
</dbReference>
<dbReference type="PROSITE" id="PS00054">
    <property type="entry name" value="RIBOSOMAL_S11"/>
    <property type="match status" value="1"/>
</dbReference>
<proteinExistence type="inferred from homology"/>
<name>RS11_PELTS</name>
<keyword id="KW-1185">Reference proteome</keyword>
<keyword id="KW-0687">Ribonucleoprotein</keyword>
<keyword id="KW-0689">Ribosomal protein</keyword>
<keyword id="KW-0694">RNA-binding</keyword>
<keyword id="KW-0699">rRNA-binding</keyword>
<organism>
    <name type="scientific">Pelotomaculum thermopropionicum (strain DSM 13744 / JCM 10971 / SI)</name>
    <dbReference type="NCBI Taxonomy" id="370438"/>
    <lineage>
        <taxon>Bacteria</taxon>
        <taxon>Bacillati</taxon>
        <taxon>Bacillota</taxon>
        <taxon>Clostridia</taxon>
        <taxon>Eubacteriales</taxon>
        <taxon>Desulfotomaculaceae</taxon>
        <taxon>Pelotomaculum</taxon>
    </lineage>
</organism>
<sequence length="129" mass="13947">MARRVTRAKKRERKNIVSGVAHIKSTFNNTIVTITDTKGNTISWSSAGQVGFKGSRKSTPFAAQMAAESAAREAMEHGLKEVEVMVKGPGAGREAAIRSLQAAGLEVNLIKDVTPIPHNGCRPPKRRRV</sequence>
<protein>
    <recommendedName>
        <fullName evidence="1">Small ribosomal subunit protein uS11</fullName>
    </recommendedName>
    <alternativeName>
        <fullName evidence="2">30S ribosomal protein S11</fullName>
    </alternativeName>
</protein>
<comment type="function">
    <text evidence="1">Located on the platform of the 30S subunit, it bridges several disparate RNA helices of the 16S rRNA. Forms part of the Shine-Dalgarno cleft in the 70S ribosome.</text>
</comment>
<comment type="subunit">
    <text evidence="1">Part of the 30S ribosomal subunit. Interacts with proteins S7 and S18. Binds to IF-3.</text>
</comment>
<comment type="similarity">
    <text evidence="1">Belongs to the universal ribosomal protein uS11 family.</text>
</comment>